<organism>
    <name type="scientific">Solanum lycopersicum</name>
    <name type="common">Tomato</name>
    <name type="synonym">Lycopersicon esculentum</name>
    <dbReference type="NCBI Taxonomy" id="4081"/>
    <lineage>
        <taxon>Eukaryota</taxon>
        <taxon>Viridiplantae</taxon>
        <taxon>Streptophyta</taxon>
        <taxon>Embryophyta</taxon>
        <taxon>Tracheophyta</taxon>
        <taxon>Spermatophyta</taxon>
        <taxon>Magnoliopsida</taxon>
        <taxon>eudicotyledons</taxon>
        <taxon>Gunneridae</taxon>
        <taxon>Pentapetalae</taxon>
        <taxon>asterids</taxon>
        <taxon>lamiids</taxon>
        <taxon>Solanales</taxon>
        <taxon>Solanaceae</taxon>
        <taxon>Solanoideae</taxon>
        <taxon>Solaneae</taxon>
        <taxon>Solanum</taxon>
        <taxon>Solanum subgen. Lycopersicon</taxon>
    </lineage>
</organism>
<evidence type="ECO:0000250" key="1"/>
<evidence type="ECO:0000256" key="2">
    <source>
        <dbReference type="SAM" id="MobiDB-lite"/>
    </source>
</evidence>
<evidence type="ECO:0000305" key="3"/>
<protein>
    <recommendedName>
        <fullName>DNA-directed RNA polymerase II subunit RPB2</fullName>
        <shortName>RNA polymerase II subunit 2</shortName>
        <shortName>RNA polymerase II subunit B2</shortName>
        <ecNumber>2.7.7.6</ecNumber>
    </recommendedName>
    <alternativeName>
        <fullName>DNA-directed RNA polymerase II 135 kDa polypeptide</fullName>
    </alternativeName>
</protein>
<comment type="function">
    <text evidence="1">DNA-dependent RNA polymerase catalyzes the transcription of DNA into RNA using the four ribonucleoside triphosphates as substrates. Second largest component of RNA polymerase II which synthesizes mRNA precursors and many functional non-coding RNAs. Proposed to contribute to the polymerase catalytic activity and forms the polymerase active center together with the largest subunit. Pol II is the central component of the basal RNA polymerase II transcription machinery. It is composed of mobile elements that move relative to each other. RPB2 is part of the core element with the central large cleft, the clamp element that moves to open and close the cleft and the jaws that are thought to grab the incoming DNA template (By similarity).</text>
</comment>
<comment type="catalytic activity">
    <reaction>
        <text>RNA(n) + a ribonucleoside 5'-triphosphate = RNA(n+1) + diphosphate</text>
        <dbReference type="Rhea" id="RHEA:21248"/>
        <dbReference type="Rhea" id="RHEA-COMP:14527"/>
        <dbReference type="Rhea" id="RHEA-COMP:17342"/>
        <dbReference type="ChEBI" id="CHEBI:33019"/>
        <dbReference type="ChEBI" id="CHEBI:61557"/>
        <dbReference type="ChEBI" id="CHEBI:140395"/>
        <dbReference type="EC" id="2.7.7.6"/>
    </reaction>
</comment>
<comment type="subunit">
    <text evidence="1">Component of the RNA polymerase II (Pol II) complex consisting of 12 subunits.</text>
</comment>
<comment type="subcellular location">
    <subcellularLocation>
        <location evidence="1">Nucleus</location>
    </subcellularLocation>
</comment>
<comment type="miscellaneous">
    <text evidence="1">The binding of ribonucleoside triphosphate to the RNA polymerase II transcribing complex probably involves a two-step mechanism. The initial binding seems to occur at the entry (E) site and involves a magnesium ion coordinated by three conserved aspartate residues of the two largest RNA Pol II subunits (By similarity).</text>
</comment>
<comment type="similarity">
    <text evidence="3">Belongs to the RNA polymerase beta chain family.</text>
</comment>
<dbReference type="EC" id="2.7.7.6"/>
<dbReference type="EMBL" id="U28403">
    <property type="protein sequence ID" value="AAC49273.1"/>
    <property type="molecule type" value="mRNA"/>
</dbReference>
<dbReference type="PIR" id="S65068">
    <property type="entry name" value="S65068"/>
</dbReference>
<dbReference type="RefSeq" id="NP_001233889.1">
    <property type="nucleotide sequence ID" value="NM_001246960.2"/>
</dbReference>
<dbReference type="SMR" id="Q42877"/>
<dbReference type="FunCoup" id="Q42877">
    <property type="interactions" value="3868"/>
</dbReference>
<dbReference type="STRING" id="4081.Q42877"/>
<dbReference type="iPTMnet" id="Q42877"/>
<dbReference type="PaxDb" id="4081-Solyc02g078260.2.1"/>
<dbReference type="EnsemblPlants" id="Solyc02g078260.3.1">
    <property type="protein sequence ID" value="Solyc02g078260.3.1"/>
    <property type="gene ID" value="Solyc02g078260.3"/>
</dbReference>
<dbReference type="GeneID" id="544278"/>
<dbReference type="Gramene" id="Solyc02g078260.3.1">
    <property type="protein sequence ID" value="Solyc02g078260.3.1"/>
    <property type="gene ID" value="Solyc02g078260.3"/>
</dbReference>
<dbReference type="KEGG" id="sly:544278"/>
<dbReference type="eggNOG" id="KOG0214">
    <property type="taxonomic scope" value="Eukaryota"/>
</dbReference>
<dbReference type="HOGENOM" id="CLU_000524_5_1_1"/>
<dbReference type="InParanoid" id="Q42877"/>
<dbReference type="OMA" id="CYDRNDS"/>
<dbReference type="OrthoDB" id="10248617at2759"/>
<dbReference type="PhylomeDB" id="Q42877"/>
<dbReference type="Proteomes" id="UP000004994">
    <property type="component" value="Chromosome 2"/>
</dbReference>
<dbReference type="ExpressionAtlas" id="Q42877">
    <property type="expression patterns" value="baseline and differential"/>
</dbReference>
<dbReference type="GO" id="GO:0005739">
    <property type="term" value="C:mitochondrion"/>
    <property type="evidence" value="ECO:0007669"/>
    <property type="project" value="GOC"/>
</dbReference>
<dbReference type="GO" id="GO:0009536">
    <property type="term" value="C:plastid"/>
    <property type="evidence" value="ECO:0007669"/>
    <property type="project" value="GOC"/>
</dbReference>
<dbReference type="GO" id="GO:0005665">
    <property type="term" value="C:RNA polymerase II, core complex"/>
    <property type="evidence" value="ECO:0000318"/>
    <property type="project" value="GO_Central"/>
</dbReference>
<dbReference type="GO" id="GO:0003677">
    <property type="term" value="F:DNA binding"/>
    <property type="evidence" value="ECO:0007669"/>
    <property type="project" value="InterPro"/>
</dbReference>
<dbReference type="GO" id="GO:0003899">
    <property type="term" value="F:DNA-directed RNA polymerase activity"/>
    <property type="evidence" value="ECO:0007669"/>
    <property type="project" value="UniProtKB-EC"/>
</dbReference>
<dbReference type="GO" id="GO:0032549">
    <property type="term" value="F:ribonucleoside binding"/>
    <property type="evidence" value="ECO:0007669"/>
    <property type="project" value="InterPro"/>
</dbReference>
<dbReference type="GO" id="GO:0008270">
    <property type="term" value="F:zinc ion binding"/>
    <property type="evidence" value="ECO:0007669"/>
    <property type="project" value="UniProtKB-KW"/>
</dbReference>
<dbReference type="GO" id="GO:0006351">
    <property type="term" value="P:DNA-templated transcription"/>
    <property type="evidence" value="ECO:0007669"/>
    <property type="project" value="InterPro"/>
</dbReference>
<dbReference type="CDD" id="cd00653">
    <property type="entry name" value="RNA_pol_B_RPB2"/>
    <property type="match status" value="1"/>
</dbReference>
<dbReference type="FunFam" id="2.40.270.10:FF:000011">
    <property type="entry name" value="DNA-directed RNA polymerase subunit beta"/>
    <property type="match status" value="1"/>
</dbReference>
<dbReference type="FunFam" id="2.40.50.150:FF:000002">
    <property type="entry name" value="DNA-directed RNA polymerase subunit beta"/>
    <property type="match status" value="1"/>
</dbReference>
<dbReference type="FunFam" id="3.90.1070.20:FF:000001">
    <property type="entry name" value="DNA-directed RNA polymerase subunit beta"/>
    <property type="match status" value="1"/>
</dbReference>
<dbReference type="FunFam" id="3.90.1100.10:FF:000003">
    <property type="entry name" value="DNA-directed RNA polymerase subunit beta"/>
    <property type="match status" value="1"/>
</dbReference>
<dbReference type="FunFam" id="3.90.1100.10:FF:000005">
    <property type="entry name" value="DNA-directed RNA polymerase subunit beta"/>
    <property type="match status" value="1"/>
</dbReference>
<dbReference type="FunFam" id="3.90.1110.10:FF:000005">
    <property type="entry name" value="DNA-directed RNA polymerase subunit beta"/>
    <property type="match status" value="1"/>
</dbReference>
<dbReference type="FunFam" id="3.90.1800.10:FF:000002">
    <property type="entry name" value="DNA-directed RNA polymerase subunit beta"/>
    <property type="match status" value="1"/>
</dbReference>
<dbReference type="Gene3D" id="2.40.50.150">
    <property type="match status" value="1"/>
</dbReference>
<dbReference type="Gene3D" id="3.90.1100.10">
    <property type="match status" value="1"/>
</dbReference>
<dbReference type="Gene3D" id="2.40.270.10">
    <property type="entry name" value="DNA-directed RNA polymerase, subunit 2, domain 6"/>
    <property type="match status" value="1"/>
</dbReference>
<dbReference type="Gene3D" id="3.90.1800.10">
    <property type="entry name" value="RNA polymerase alpha subunit dimerisation domain"/>
    <property type="match status" value="1"/>
</dbReference>
<dbReference type="Gene3D" id="3.90.1110.10">
    <property type="entry name" value="RNA polymerase Rpb2, domain 2"/>
    <property type="match status" value="1"/>
</dbReference>
<dbReference type="InterPro" id="IPR015712">
    <property type="entry name" value="DNA-dir_RNA_pol_su2"/>
</dbReference>
<dbReference type="InterPro" id="IPR007120">
    <property type="entry name" value="DNA-dir_RNAP_su2_dom"/>
</dbReference>
<dbReference type="InterPro" id="IPR037033">
    <property type="entry name" value="DNA-dir_RNAP_su2_hyb_sf"/>
</dbReference>
<dbReference type="InterPro" id="IPR007121">
    <property type="entry name" value="RNA_pol_bsu_CS"/>
</dbReference>
<dbReference type="InterPro" id="IPR007644">
    <property type="entry name" value="RNA_pol_bsu_protrusion"/>
</dbReference>
<dbReference type="InterPro" id="IPR007642">
    <property type="entry name" value="RNA_pol_Rpb2_2"/>
</dbReference>
<dbReference type="InterPro" id="IPR037034">
    <property type="entry name" value="RNA_pol_Rpb2_2_sf"/>
</dbReference>
<dbReference type="InterPro" id="IPR007645">
    <property type="entry name" value="RNA_pol_Rpb2_3"/>
</dbReference>
<dbReference type="InterPro" id="IPR007646">
    <property type="entry name" value="RNA_pol_Rpb2_4"/>
</dbReference>
<dbReference type="InterPro" id="IPR007647">
    <property type="entry name" value="RNA_pol_Rpb2_5"/>
</dbReference>
<dbReference type="InterPro" id="IPR007641">
    <property type="entry name" value="RNA_pol_Rpb2_7"/>
</dbReference>
<dbReference type="InterPro" id="IPR014724">
    <property type="entry name" value="RNA_pol_RPB2_OB-fold"/>
</dbReference>
<dbReference type="NCBIfam" id="NF007175">
    <property type="entry name" value="PRK09606.1"/>
    <property type="match status" value="1"/>
</dbReference>
<dbReference type="PANTHER" id="PTHR20856">
    <property type="entry name" value="DNA-DIRECTED RNA POLYMERASE I SUBUNIT 2"/>
    <property type="match status" value="1"/>
</dbReference>
<dbReference type="Pfam" id="PF04563">
    <property type="entry name" value="RNA_pol_Rpb2_1"/>
    <property type="match status" value="1"/>
</dbReference>
<dbReference type="Pfam" id="PF04561">
    <property type="entry name" value="RNA_pol_Rpb2_2"/>
    <property type="match status" value="1"/>
</dbReference>
<dbReference type="Pfam" id="PF04565">
    <property type="entry name" value="RNA_pol_Rpb2_3"/>
    <property type="match status" value="1"/>
</dbReference>
<dbReference type="Pfam" id="PF04566">
    <property type="entry name" value="RNA_pol_Rpb2_4"/>
    <property type="match status" value="1"/>
</dbReference>
<dbReference type="Pfam" id="PF04567">
    <property type="entry name" value="RNA_pol_Rpb2_5"/>
    <property type="match status" value="1"/>
</dbReference>
<dbReference type="Pfam" id="PF00562">
    <property type="entry name" value="RNA_pol_Rpb2_6"/>
    <property type="match status" value="1"/>
</dbReference>
<dbReference type="Pfam" id="PF04560">
    <property type="entry name" value="RNA_pol_Rpb2_7"/>
    <property type="match status" value="1"/>
</dbReference>
<dbReference type="SUPFAM" id="SSF64484">
    <property type="entry name" value="beta and beta-prime subunits of DNA dependent RNA-polymerase"/>
    <property type="match status" value="1"/>
</dbReference>
<dbReference type="PROSITE" id="PS01166">
    <property type="entry name" value="RNA_POL_BETA"/>
    <property type="match status" value="1"/>
</dbReference>
<name>RPB2_SOLLC</name>
<feature type="chain" id="PRO_0000048082" description="DNA-directed RNA polymerase II subunit RPB2">
    <location>
        <begin position="1"/>
        <end position="1191"/>
    </location>
</feature>
<feature type="zinc finger region" description="C4-type">
    <location>
        <begin position="1123"/>
        <end position="1144"/>
    </location>
</feature>
<feature type="region of interest" description="Disordered" evidence="2">
    <location>
        <begin position="842"/>
        <end position="903"/>
    </location>
</feature>
<feature type="compositionally biased region" description="Polar residues" evidence="2">
    <location>
        <begin position="878"/>
        <end position="891"/>
    </location>
</feature>
<feature type="compositionally biased region" description="Basic and acidic residues" evidence="2">
    <location>
        <begin position="893"/>
        <end position="903"/>
    </location>
</feature>
<feature type="binding site" evidence="1">
    <location>
        <position position="799"/>
    </location>
    <ligand>
        <name>Mg(2+)</name>
        <dbReference type="ChEBI" id="CHEBI:18420"/>
        <note>ligand shared with RPB1</note>
    </ligand>
</feature>
<feature type="binding site" evidence="1">
    <location>
        <position position="1123"/>
    </location>
    <ligand>
        <name>Zn(2+)</name>
        <dbReference type="ChEBI" id="CHEBI:29105"/>
    </ligand>
</feature>
<feature type="binding site" evidence="1">
    <location>
        <position position="1126"/>
    </location>
    <ligand>
        <name>Zn(2+)</name>
        <dbReference type="ChEBI" id="CHEBI:29105"/>
    </ligand>
</feature>
<feature type="binding site" evidence="1">
    <location>
        <position position="1141"/>
    </location>
    <ligand>
        <name>Zn(2+)</name>
        <dbReference type="ChEBI" id="CHEBI:29105"/>
    </ligand>
</feature>
<feature type="binding site" evidence="1">
    <location>
        <position position="1144"/>
    </location>
    <ligand>
        <name>Zn(2+)</name>
        <dbReference type="ChEBI" id="CHEBI:29105"/>
    </ligand>
</feature>
<keyword id="KW-0240">DNA-directed RNA polymerase</keyword>
<keyword id="KW-0460">Magnesium</keyword>
<keyword id="KW-0479">Metal-binding</keyword>
<keyword id="KW-0548">Nucleotidyltransferase</keyword>
<keyword id="KW-0539">Nucleus</keyword>
<keyword id="KW-1185">Reference proteome</keyword>
<keyword id="KW-0804">Transcription</keyword>
<keyword id="KW-0808">Transferase</keyword>
<keyword id="KW-0862">Zinc</keyword>
<keyword id="KW-0863">Zinc-finger</keyword>
<accession>Q42877</accession>
<gene>
    <name type="primary">RPB2</name>
</gene>
<sequence>MDMEDEYEPQYNVDDDEEEITQEDAWAVISAYFEEKGLVRQQLDSFDEFIQNTMQEIVDESADIEIRPESQHNPGHQSDFAETIYKINFGQIYLSKPMMTESDGETATLFPKAARLRNLTYSAPLYVDVTKRVIKKGHDGEEVTETQDFTKVFIGKVPIMLRSSYCTLYQNSEKDLTELGECPLDQGGYFIINGSEKVLIAQEKMSTNHVYVFKKRQPNKYAFVAEVRSMADTQNRPPSTMFVRMLSRTSAKGGSSGQYIRATLPYIRTEIPIIIVFRALGFVADKDILEHICYDFNDTQMMELLRPSLEEAFVIQNQQVALDYIGKRGATVGVTREKRIKYAKEILQKEMLPHVGVGEYCETKKAYYFGYIIHRLLLCALGRRAEDDRDHYGNKRLDLAGPLLGGLFRMLFRKLTRDVRGYVQKCVDNGKDVNLQFAIKAKTITSGLKYSLATGNWGQANAAGTRAGVSQVLNRLTYASTLSHLRRLNSPIGREGKLAKPRQLHNSQWGMMCPAETPEGQACGLVKNLALMVYITVGSAAYPILEFLEEWGTENFEEISPAVIPQATKIFVNGTWVGIHRDPDMLVRTLRRLRRRVDVNTEVGVVRDIRLKELRIYTDYGRCSRPLFIVEKQRLMIKKKDIQTLQQRESPDEGGWHDLVAKGYIEYIDTEEEETTMISMTINDLVQARLNPGDAYSDTYTHCEIHPSLILGVCASIIPFPDHNQSPRNTYQSAMGKQAMGIYVTNYQFRMDTLAYVLYYPQKPLVTTRAMEHLHFRQLPAGINAIVAISCYSGYNQEDSVIMNQSSIDRGFFRSLFFRSYRDEEKKMGTLVKEDFGRPDRASTMGMRHGSYDKLDDDGLAPPGTRVSGEDVIIGKTTPISQDDAQGQASRYTRKDHSTSLRHSETGMVDQVLLTTNADGLRFVKVRVRSVRIPQIGDKFSSRHGQKGTVGMTYTQEDMPWTVEGITPDIIVNPHAIPSRMTIGQLIECIMGKVAAHMGKEGDATPFTDVTVDNISKALHKCGYQMRGFETMYNGHTGRRLSAMIFLGPTYYQRLKHMVDDKIHSRGRGPVQILTRQPAEGRSRDGGLRFGEMERDCMIAHGAAHFLKERLFDQSDAYRVHVCERCGLIAIANLKKNSFECRGCKNKTDIVQVHIPYACKLLFQELMAMAIAPRMLTKDVKLAKDQKKKGA</sequence>
<reference key="1">
    <citation type="journal article" date="1996" name="Plant Mol. Biol.">
        <title>Sequence analysis of the second largest subunit of tomato RNA polymerase II.</title>
        <authorList>
            <person name="Warrilow D."/>
            <person name="Symons R.H."/>
        </authorList>
    </citation>
    <scope>NUCLEOTIDE SEQUENCE [MRNA]</scope>
    <source>
        <strain>cv. Grosse lisse</strain>
    </source>
</reference>
<proteinExistence type="evidence at transcript level"/>